<comment type="function">
    <text evidence="1">Uses inorganic polyphosphate (polyP) as a donor to convert ADP to ATP.</text>
</comment>
<comment type="catalytic activity">
    <reaction evidence="1">
        <text>[phosphate](n) + ATP = [phosphate](n+1) + ADP</text>
        <dbReference type="Rhea" id="RHEA:19573"/>
        <dbReference type="Rhea" id="RHEA-COMP:9859"/>
        <dbReference type="Rhea" id="RHEA-COMP:14280"/>
        <dbReference type="ChEBI" id="CHEBI:16838"/>
        <dbReference type="ChEBI" id="CHEBI:30616"/>
        <dbReference type="ChEBI" id="CHEBI:456216"/>
    </reaction>
    <physiologicalReaction direction="right-to-left" evidence="1">
        <dbReference type="Rhea" id="RHEA:19575"/>
    </physiologicalReaction>
</comment>
<comment type="similarity">
    <text evidence="2">Belongs to the polyphosphate kinase 2 (PPK2) family. Class I subfamily.</text>
</comment>
<dbReference type="EC" id="2.7.4.-" evidence="1"/>
<dbReference type="EMBL" id="BX572607">
    <property type="protein sequence ID" value="CAE30009.1"/>
    <property type="molecule type" value="Genomic_DNA"/>
</dbReference>
<dbReference type="RefSeq" id="WP_011160101.1">
    <property type="nucleotide sequence ID" value="NZ_CP116810.1"/>
</dbReference>
<dbReference type="SMR" id="Q6N140"/>
<dbReference type="STRING" id="258594.RPA4569"/>
<dbReference type="GeneID" id="66895720"/>
<dbReference type="eggNOG" id="COG2326">
    <property type="taxonomic scope" value="Bacteria"/>
</dbReference>
<dbReference type="HOGENOM" id="CLU_048699_1_0_5"/>
<dbReference type="PhylomeDB" id="Q6N140"/>
<dbReference type="GO" id="GO:0008976">
    <property type="term" value="F:polyphosphate kinase activity"/>
    <property type="evidence" value="ECO:0007669"/>
    <property type="project" value="UniProtKB-EC"/>
</dbReference>
<dbReference type="GO" id="GO:0006754">
    <property type="term" value="P:ATP biosynthetic process"/>
    <property type="evidence" value="ECO:0007669"/>
    <property type="project" value="UniProtKB-KW"/>
</dbReference>
<dbReference type="GO" id="GO:0006797">
    <property type="term" value="P:polyphosphate metabolic process"/>
    <property type="evidence" value="ECO:0007669"/>
    <property type="project" value="InterPro"/>
</dbReference>
<dbReference type="Gene3D" id="3.40.50.300">
    <property type="entry name" value="P-loop containing nucleotide triphosphate hydrolases"/>
    <property type="match status" value="1"/>
</dbReference>
<dbReference type="InterPro" id="IPR027417">
    <property type="entry name" value="P-loop_NTPase"/>
</dbReference>
<dbReference type="InterPro" id="IPR016898">
    <property type="entry name" value="Polyphosphate_phosphotransfera"/>
</dbReference>
<dbReference type="InterPro" id="IPR050038">
    <property type="entry name" value="PPK2"/>
</dbReference>
<dbReference type="InterPro" id="IPR022300">
    <property type="entry name" value="PPK2-rel_1"/>
</dbReference>
<dbReference type="InterPro" id="IPR022488">
    <property type="entry name" value="PPK2-related"/>
</dbReference>
<dbReference type="NCBIfam" id="NF042973">
    <property type="entry name" value="ADPpolyPPhtase"/>
    <property type="match status" value="1"/>
</dbReference>
<dbReference type="NCBIfam" id="TIGR03709">
    <property type="entry name" value="PPK2_rel_1"/>
    <property type="match status" value="1"/>
</dbReference>
<dbReference type="PANTHER" id="PTHR34383:SF3">
    <property type="entry name" value="POLYPHOSPHATE:AMP PHOSPHOTRANSFERASE"/>
    <property type="match status" value="1"/>
</dbReference>
<dbReference type="PANTHER" id="PTHR34383">
    <property type="entry name" value="POLYPHOSPHATE:AMP PHOSPHOTRANSFERASE-RELATED"/>
    <property type="match status" value="1"/>
</dbReference>
<dbReference type="Pfam" id="PF03976">
    <property type="entry name" value="PPK2"/>
    <property type="match status" value="1"/>
</dbReference>
<dbReference type="PIRSF" id="PIRSF028756">
    <property type="entry name" value="PPK2_prd"/>
    <property type="match status" value="1"/>
</dbReference>
<dbReference type="SUPFAM" id="SSF52540">
    <property type="entry name" value="P-loop containing nucleoside triphosphate hydrolases"/>
    <property type="match status" value="1"/>
</dbReference>
<name>PK21_RHOPA</name>
<accession>Q6N140</accession>
<feature type="chain" id="PRO_0000442592" description="ADP-polyphosphate phosphotransferase">
    <location>
        <begin position="1"/>
        <end position="289"/>
    </location>
</feature>
<organism>
    <name type="scientific">Rhodopseudomonas palustris (strain ATCC BAA-98 / CGA009)</name>
    <dbReference type="NCBI Taxonomy" id="258594"/>
    <lineage>
        <taxon>Bacteria</taxon>
        <taxon>Pseudomonadati</taxon>
        <taxon>Pseudomonadota</taxon>
        <taxon>Alphaproteobacteria</taxon>
        <taxon>Hyphomicrobiales</taxon>
        <taxon>Nitrobacteraceae</taxon>
        <taxon>Rhodopseudomonas</taxon>
    </lineage>
</organism>
<evidence type="ECO:0000269" key="1">
    <source>
    </source>
</evidence>
<evidence type="ECO:0000305" key="2"/>
<evidence type="ECO:0000312" key="3">
    <source>
        <dbReference type="EMBL" id="CAE30009.1"/>
    </source>
</evidence>
<sequence>MKIKTKQFRVGEGEKVDLGKWPTKVDPFYESKEHYHELLRTQVERLSDLQQLLYASNRHAVLLIFQAMDAAGKDGVIRHVLSGINPQGCQVFSFKHPSATELQHDFLWRTTRDLPERGRIGVFNRSYYEEVLIVRVHPDILQSEAVPNGENFGKSFWHKRYRSIRNLEQHLHANGTRIVKFFLHLSKDEQRKRFLARIDEPEKNWKFSAADLEERQYWDDYMDAYEKCLSETSSEDSPWYAVPADDKENARLIVSQVIAETMESLKMSYPETTPARRKELLQMRQQLLK</sequence>
<protein>
    <recommendedName>
        <fullName evidence="2">ADP-polyphosphate phosphotransferase</fullName>
        <ecNumber evidence="1">2.7.4.-</ecNumber>
    </recommendedName>
    <alternativeName>
        <fullName evidence="2">Polyphosphate kinase PPK2</fullName>
    </alternativeName>
</protein>
<proteinExistence type="evidence at protein level"/>
<keyword id="KW-0066">ATP synthesis</keyword>
<keyword id="KW-0418">Kinase</keyword>
<keyword id="KW-0808">Transferase</keyword>
<reference key="1">
    <citation type="journal article" date="2004" name="Nat. Biotechnol.">
        <title>Complete genome sequence of the metabolically versatile photosynthetic bacterium Rhodopseudomonas palustris.</title>
        <authorList>
            <person name="Larimer F.W."/>
            <person name="Chain P."/>
            <person name="Hauser L."/>
            <person name="Lamerdin J.E."/>
            <person name="Malfatti S."/>
            <person name="Do L."/>
            <person name="Land M.L."/>
            <person name="Pelletier D.A."/>
            <person name="Beatty J.T."/>
            <person name="Lang A.S."/>
            <person name="Tabita F.R."/>
            <person name="Gibson J.L."/>
            <person name="Hanson T.E."/>
            <person name="Bobst C."/>
            <person name="Torres y Torres J.L."/>
            <person name="Peres C."/>
            <person name="Harrison F.H."/>
            <person name="Gibson J."/>
            <person name="Harwood C.S."/>
        </authorList>
    </citation>
    <scope>NUCLEOTIDE SEQUENCE [LARGE SCALE GENOMIC DNA]</scope>
    <source>
        <strain>ATCC BAA-98 / CGA009</strain>
    </source>
</reference>
<reference key="2">
    <citation type="journal article" date="2008" name="Proc. Natl. Acad. Sci. U.S.A.">
        <title>Polyphosphate-dependent synthesis of ATP and ADP by the family-2 polyphosphate kinases in bacteria.</title>
        <authorList>
            <person name="Nocek B."/>
            <person name="Kochinyan S."/>
            <person name="Proudfoot M."/>
            <person name="Brown G."/>
            <person name="Evdokimova E."/>
            <person name="Osipiuk J."/>
            <person name="Edwards A.M."/>
            <person name="Savchenko A."/>
            <person name="Joachimiak A."/>
            <person name="Yakunin A.F."/>
        </authorList>
    </citation>
    <scope>FUNCTION</scope>
    <scope>CATALYTIC ACTIVITY</scope>
</reference>
<gene>
    <name evidence="3" type="ordered locus">RPA4569</name>
</gene>